<keyword id="KW-0004">4Fe-4S</keyword>
<keyword id="KW-0067">ATP-binding</keyword>
<keyword id="KW-0963">Cytoplasm</keyword>
<keyword id="KW-0408">Iron</keyword>
<keyword id="KW-0411">Iron-sulfur</keyword>
<keyword id="KW-0418">Kinase</keyword>
<keyword id="KW-0479">Metal-binding</keyword>
<keyword id="KW-0547">Nucleotide-binding</keyword>
<keyword id="KW-0597">Phosphoprotein</keyword>
<keyword id="KW-0808">Transferase</keyword>
<keyword id="KW-0902">Two-component regulatory system</keyword>
<name>NREB_STAES</name>
<feature type="chain" id="PRO_0000349339" description="Oxygen sensor histidine kinase NreB">
    <location>
        <begin position="1"/>
        <end position="344"/>
    </location>
</feature>
<feature type="domain" description="Histidine kinase" evidence="3">
    <location>
        <begin position="147"/>
        <end position="344"/>
    </location>
</feature>
<feature type="binding site" evidence="2">
    <location>
        <position position="58"/>
    </location>
    <ligand>
        <name>[4Fe-4S] cluster</name>
        <dbReference type="ChEBI" id="CHEBI:49883"/>
    </ligand>
</feature>
<feature type="binding site" evidence="2">
    <location>
        <position position="61"/>
    </location>
    <ligand>
        <name>[4Fe-4S] cluster</name>
        <dbReference type="ChEBI" id="CHEBI:49883"/>
    </ligand>
</feature>
<feature type="binding site" evidence="2">
    <location>
        <position position="73"/>
    </location>
    <ligand>
        <name>[4Fe-4S] cluster</name>
        <dbReference type="ChEBI" id="CHEBI:49883"/>
    </ligand>
</feature>
<feature type="binding site" evidence="2">
    <location>
        <position position="76"/>
    </location>
    <ligand>
        <name>[4Fe-4S] cluster</name>
        <dbReference type="ChEBI" id="CHEBI:49883"/>
    </ligand>
</feature>
<feature type="modified residue" description="Phosphohistidine; by autocatalysis" evidence="3">
    <location>
        <position position="158"/>
    </location>
</feature>
<evidence type="ECO:0000250" key="1"/>
<evidence type="ECO:0000255" key="2"/>
<evidence type="ECO:0000255" key="3">
    <source>
        <dbReference type="PROSITE-ProRule" id="PRU00107"/>
    </source>
</evidence>
<evidence type="ECO:0000305" key="4"/>
<accession>Q8CR97</accession>
<reference key="1">
    <citation type="journal article" date="2003" name="Mol. Microbiol.">
        <title>Genome-based analysis of virulence genes in a non-biofilm-forming Staphylococcus epidermidis strain (ATCC 12228).</title>
        <authorList>
            <person name="Zhang Y.-Q."/>
            <person name="Ren S.-X."/>
            <person name="Li H.-L."/>
            <person name="Wang Y.-X."/>
            <person name="Fu G."/>
            <person name="Yang J."/>
            <person name="Qin Z.-Q."/>
            <person name="Miao Y.-G."/>
            <person name="Wang W.-Y."/>
            <person name="Chen R.-S."/>
            <person name="Shen Y."/>
            <person name="Chen Z."/>
            <person name="Yuan Z.-H."/>
            <person name="Zhao G.-P."/>
            <person name="Qu D."/>
            <person name="Danchin A."/>
            <person name="Wen Y.-M."/>
        </authorList>
    </citation>
    <scope>NUCLEOTIDE SEQUENCE [LARGE SCALE GENOMIC DNA]</scope>
    <source>
        <strain>ATCC 12228 / FDA PCI 1200</strain>
    </source>
</reference>
<organism>
    <name type="scientific">Staphylococcus epidermidis (strain ATCC 12228 / FDA PCI 1200)</name>
    <dbReference type="NCBI Taxonomy" id="176280"/>
    <lineage>
        <taxon>Bacteria</taxon>
        <taxon>Bacillati</taxon>
        <taxon>Bacillota</taxon>
        <taxon>Bacilli</taxon>
        <taxon>Bacillales</taxon>
        <taxon>Staphylococcaceae</taxon>
        <taxon>Staphylococcus</taxon>
    </lineage>
</organism>
<comment type="function">
    <text evidence="1">Member of the two-component regulatory system NreB/NreC involved in the control of dissimilatory nitrate/nitrite reduction in response to oxygen. NreB functions as a direct oxygen sensor histidine kinase which is autophosphorylated, in the absence of oxygen, probably at the conserved histidine residue, and transfers its phosphate group probably to a conserved aspartate residue of NreC. NreB/NreC activates the expression of the nitrate (narGHJI) and nitrite (nir) reductase operons, as well as the putative nitrate transporter gene narT (By similarity).</text>
</comment>
<comment type="catalytic activity">
    <reaction>
        <text>ATP + protein L-histidine = ADP + protein N-phospho-L-histidine.</text>
        <dbReference type="EC" id="2.7.13.3"/>
    </reaction>
</comment>
<comment type="cofactor">
    <cofactor evidence="4">
        <name>[4Fe-4S] cluster</name>
        <dbReference type="ChEBI" id="CHEBI:49883"/>
    </cofactor>
    <text evidence="4">Binds 1 [4Fe-4S] cluster.</text>
</comment>
<comment type="subcellular location">
    <subcellularLocation>
        <location evidence="4">Cytoplasm</location>
    </subcellularLocation>
</comment>
<comment type="PTM">
    <text evidence="1">Autophosphorylated.</text>
</comment>
<dbReference type="EC" id="2.7.13.3"/>
<dbReference type="EMBL" id="AE015929">
    <property type="protein sequence ID" value="AAO05611.1"/>
    <property type="molecule type" value="Genomic_DNA"/>
</dbReference>
<dbReference type="RefSeq" id="NP_765525.1">
    <property type="nucleotide sequence ID" value="NC_004461.1"/>
</dbReference>
<dbReference type="RefSeq" id="WP_002456059.1">
    <property type="nucleotide sequence ID" value="NZ_WBME01000017.1"/>
</dbReference>
<dbReference type="SMR" id="Q8CR97"/>
<dbReference type="KEGG" id="sep:SE_1970"/>
<dbReference type="PATRIC" id="fig|176280.10.peg.1923"/>
<dbReference type="eggNOG" id="COG4585">
    <property type="taxonomic scope" value="Bacteria"/>
</dbReference>
<dbReference type="HOGENOM" id="CLU_000445_114_0_9"/>
<dbReference type="OrthoDB" id="9760839at2"/>
<dbReference type="Proteomes" id="UP000001411">
    <property type="component" value="Chromosome"/>
</dbReference>
<dbReference type="GO" id="GO:0005737">
    <property type="term" value="C:cytoplasm"/>
    <property type="evidence" value="ECO:0007669"/>
    <property type="project" value="UniProtKB-SubCell"/>
</dbReference>
<dbReference type="GO" id="GO:0016020">
    <property type="term" value="C:membrane"/>
    <property type="evidence" value="ECO:0007669"/>
    <property type="project" value="InterPro"/>
</dbReference>
<dbReference type="GO" id="GO:0051539">
    <property type="term" value="F:4 iron, 4 sulfur cluster binding"/>
    <property type="evidence" value="ECO:0007669"/>
    <property type="project" value="UniProtKB-KW"/>
</dbReference>
<dbReference type="GO" id="GO:0005524">
    <property type="term" value="F:ATP binding"/>
    <property type="evidence" value="ECO:0007669"/>
    <property type="project" value="UniProtKB-KW"/>
</dbReference>
<dbReference type="GO" id="GO:0005506">
    <property type="term" value="F:iron ion binding"/>
    <property type="evidence" value="ECO:0007669"/>
    <property type="project" value="InterPro"/>
</dbReference>
<dbReference type="GO" id="GO:0000155">
    <property type="term" value="F:phosphorelay sensor kinase activity"/>
    <property type="evidence" value="ECO:0007669"/>
    <property type="project" value="InterPro"/>
</dbReference>
<dbReference type="GO" id="GO:0046983">
    <property type="term" value="F:protein dimerization activity"/>
    <property type="evidence" value="ECO:0007669"/>
    <property type="project" value="InterPro"/>
</dbReference>
<dbReference type="CDD" id="cd16917">
    <property type="entry name" value="HATPase_UhpB-NarQ-NarX-like"/>
    <property type="match status" value="1"/>
</dbReference>
<dbReference type="Gene3D" id="1.20.5.1930">
    <property type="match status" value="1"/>
</dbReference>
<dbReference type="Gene3D" id="3.30.565.10">
    <property type="entry name" value="Histidine kinase-like ATPase, C-terminal domain"/>
    <property type="match status" value="1"/>
</dbReference>
<dbReference type="InterPro" id="IPR036890">
    <property type="entry name" value="HATPase_C_sf"/>
</dbReference>
<dbReference type="InterPro" id="IPR005467">
    <property type="entry name" value="His_kinase_dom"/>
</dbReference>
<dbReference type="InterPro" id="IPR050482">
    <property type="entry name" value="Sensor_HK_TwoCompSys"/>
</dbReference>
<dbReference type="InterPro" id="IPR004358">
    <property type="entry name" value="Sig_transdc_His_kin-like_C"/>
</dbReference>
<dbReference type="InterPro" id="IPR011712">
    <property type="entry name" value="Sig_transdc_His_kin_sub3_dim/P"/>
</dbReference>
<dbReference type="InterPro" id="IPR017203">
    <property type="entry name" value="Sig_transdc_His_kinase_NreB"/>
</dbReference>
<dbReference type="PANTHER" id="PTHR24421">
    <property type="entry name" value="NITRATE/NITRITE SENSOR PROTEIN NARX-RELATED"/>
    <property type="match status" value="1"/>
</dbReference>
<dbReference type="PANTHER" id="PTHR24421:SF10">
    <property type="entry name" value="NITRATE_NITRITE SENSOR PROTEIN NARQ"/>
    <property type="match status" value="1"/>
</dbReference>
<dbReference type="Pfam" id="PF02518">
    <property type="entry name" value="HATPase_c"/>
    <property type="match status" value="1"/>
</dbReference>
<dbReference type="Pfam" id="PF07730">
    <property type="entry name" value="HisKA_3"/>
    <property type="match status" value="1"/>
</dbReference>
<dbReference type="PIRSF" id="PIRSF037432">
    <property type="entry name" value="STHK_NreB"/>
    <property type="match status" value="1"/>
</dbReference>
<dbReference type="PRINTS" id="PR00344">
    <property type="entry name" value="BCTRLSENSOR"/>
</dbReference>
<dbReference type="SMART" id="SM00387">
    <property type="entry name" value="HATPase_c"/>
    <property type="match status" value="1"/>
</dbReference>
<dbReference type="SUPFAM" id="SSF55874">
    <property type="entry name" value="ATPase domain of HSP90 chaperone/DNA topoisomerase II/histidine kinase"/>
    <property type="match status" value="1"/>
</dbReference>
<dbReference type="PROSITE" id="PS50109">
    <property type="entry name" value="HIS_KIN"/>
    <property type="match status" value="1"/>
</dbReference>
<proteinExistence type="inferred from homology"/>
<sequence>MLEQTDLSLEQLLKNYYETTNEKIVFVNRQGKIIAMNDAAKDILTEEDNYNAMTNAICHRCEGYSNEYDVQSCKDCFLETTQLQHSNFQVFMKTKDNEIKPFTAMYQNIDEQRGISAFTLQNVAPQIERQEKMYQQKMLHRSIQAQENERKRISRELHDSVIQDMLNIDVELRLLKYKHRDKVLAETSQRIEGLLSQLIDDIRNMSVELRPSSLDDLGIEAAFKSYFKQFEENYGMHIKYDSNIKGMRFDNEIETVVYRVVQEGVFNALKYAEVNEIEVSTHSDGKQLVAEVVDRGKGFSLDHHPKGSGLGLYGMRERAELVNGHVNIETHINRGTIITLDIPI</sequence>
<gene>
    <name type="primary">nreB</name>
    <name type="ordered locus">SE_1970</name>
</gene>
<protein>
    <recommendedName>
        <fullName>Oxygen sensor histidine kinase NreB</fullName>
        <ecNumber>2.7.13.3</ecNumber>
    </recommendedName>
    <alternativeName>
        <fullName>Nitrogen regulation protein B</fullName>
    </alternativeName>
</protein>